<sequence length="255" mass="29494">MGQKVNPLGFRLGVTQEHHSYWFATNKQFAGFLEEDQKIRHYIYQYVQKHIRESSNTSYGYSGVSKIEIKRDTELIHVEIHTSGFPALLIKGQIKEKNRDKNKSNKNSALDQSVNKNQNKNTGQELEKMWRYVQRSLTLSNGKFRMTLSKVSNPYKEANIVAEYIARQLENRVAFRRAMKQAIKDAKENGQVKGIKIQISGRLNGAEIARVEWAREGRVPLQTLRAKIDYCHYPAQTKYGVLGIKVWIFQGEGWT</sequence>
<comment type="subunit">
    <text evidence="1">Part of the 30S ribosomal subunit.</text>
</comment>
<comment type="subcellular location">
    <subcellularLocation>
        <location>Plastid</location>
        <location>Chloroplast</location>
    </subcellularLocation>
</comment>
<comment type="similarity">
    <text evidence="3">Belongs to the universal ribosomal protein uS3 family.</text>
</comment>
<keyword id="KW-0150">Chloroplast</keyword>
<keyword id="KW-0934">Plastid</keyword>
<keyword id="KW-0687">Ribonucleoprotein</keyword>
<keyword id="KW-0689">Ribosomal protein</keyword>
<keyword id="KW-0694">RNA-binding</keyword>
<keyword id="KW-0699">rRNA-binding</keyword>
<name>RR3_CHAGL</name>
<feature type="chain" id="PRO_0000130273" description="Small ribosomal subunit protein uS3c">
    <location>
        <begin position="1"/>
        <end position="255"/>
    </location>
</feature>
<feature type="domain" description="KH type-2">
    <location>
        <begin position="51"/>
        <end position="124"/>
    </location>
</feature>
<feature type="region of interest" description="Disordered" evidence="2">
    <location>
        <begin position="96"/>
        <end position="121"/>
    </location>
</feature>
<feature type="compositionally biased region" description="Polar residues" evidence="2">
    <location>
        <begin position="108"/>
        <end position="121"/>
    </location>
</feature>
<organism>
    <name type="scientific">Chaetosphaeridium globosum</name>
    <name type="common">Charophycean green alga</name>
    <name type="synonym">Herposteiron globosum</name>
    <dbReference type="NCBI Taxonomy" id="96477"/>
    <lineage>
        <taxon>Eukaryota</taxon>
        <taxon>Viridiplantae</taxon>
        <taxon>Streptophyta</taxon>
        <taxon>Coleochaetophyceae</taxon>
        <taxon>Coleochaetales</taxon>
        <taxon>Chaetosphaeridiaceae</taxon>
        <taxon>Chaetosphaeridium</taxon>
    </lineage>
</organism>
<geneLocation type="chloroplast"/>
<evidence type="ECO:0000250" key="1"/>
<evidence type="ECO:0000256" key="2">
    <source>
        <dbReference type="SAM" id="MobiDB-lite"/>
    </source>
</evidence>
<evidence type="ECO:0000305" key="3"/>
<proteinExistence type="inferred from homology"/>
<gene>
    <name type="primary">rps3</name>
</gene>
<dbReference type="EMBL" id="AF494278">
    <property type="protein sequence ID" value="AAM96576.1"/>
    <property type="molecule type" value="Genomic_DNA"/>
</dbReference>
<dbReference type="RefSeq" id="NP_683840.1">
    <property type="nucleotide sequence ID" value="NC_004115.1"/>
</dbReference>
<dbReference type="SMR" id="Q8M9V0"/>
<dbReference type="GeneID" id="860732"/>
<dbReference type="GO" id="GO:0009507">
    <property type="term" value="C:chloroplast"/>
    <property type="evidence" value="ECO:0007669"/>
    <property type="project" value="UniProtKB-SubCell"/>
</dbReference>
<dbReference type="GO" id="GO:0022627">
    <property type="term" value="C:cytosolic small ribosomal subunit"/>
    <property type="evidence" value="ECO:0007669"/>
    <property type="project" value="TreeGrafter"/>
</dbReference>
<dbReference type="GO" id="GO:0019843">
    <property type="term" value="F:rRNA binding"/>
    <property type="evidence" value="ECO:0007669"/>
    <property type="project" value="UniProtKB-KW"/>
</dbReference>
<dbReference type="GO" id="GO:0003735">
    <property type="term" value="F:structural constituent of ribosome"/>
    <property type="evidence" value="ECO:0007669"/>
    <property type="project" value="InterPro"/>
</dbReference>
<dbReference type="GO" id="GO:0006412">
    <property type="term" value="P:translation"/>
    <property type="evidence" value="ECO:0007669"/>
    <property type="project" value="UniProtKB-UniRule"/>
</dbReference>
<dbReference type="CDD" id="cd02412">
    <property type="entry name" value="KH-II_30S_S3"/>
    <property type="match status" value="1"/>
</dbReference>
<dbReference type="Gene3D" id="3.30.300.20">
    <property type="match status" value="1"/>
</dbReference>
<dbReference type="Gene3D" id="3.30.1140.32">
    <property type="entry name" value="Ribosomal protein S3, C-terminal domain"/>
    <property type="match status" value="1"/>
</dbReference>
<dbReference type="HAMAP" id="MF_01309_B">
    <property type="entry name" value="Ribosomal_uS3_B"/>
    <property type="match status" value="1"/>
</dbReference>
<dbReference type="InterPro" id="IPR015946">
    <property type="entry name" value="KH_dom-like_a/b"/>
</dbReference>
<dbReference type="InterPro" id="IPR009019">
    <property type="entry name" value="KH_sf_prok-type"/>
</dbReference>
<dbReference type="InterPro" id="IPR036419">
    <property type="entry name" value="Ribosomal_S3_C_sf"/>
</dbReference>
<dbReference type="InterPro" id="IPR005704">
    <property type="entry name" value="Ribosomal_uS3_bac-typ"/>
</dbReference>
<dbReference type="InterPro" id="IPR001351">
    <property type="entry name" value="Ribosomal_uS3_C"/>
</dbReference>
<dbReference type="InterPro" id="IPR018280">
    <property type="entry name" value="Ribosomal_uS3_CS"/>
</dbReference>
<dbReference type="NCBIfam" id="TIGR01009">
    <property type="entry name" value="rpsC_bact"/>
    <property type="match status" value="1"/>
</dbReference>
<dbReference type="PANTHER" id="PTHR11760">
    <property type="entry name" value="30S/40S RIBOSOMAL PROTEIN S3"/>
    <property type="match status" value="1"/>
</dbReference>
<dbReference type="PANTHER" id="PTHR11760:SF19">
    <property type="entry name" value="SMALL RIBOSOMAL SUBUNIT PROTEIN US3C"/>
    <property type="match status" value="1"/>
</dbReference>
<dbReference type="Pfam" id="PF00189">
    <property type="entry name" value="Ribosomal_S3_C"/>
    <property type="match status" value="1"/>
</dbReference>
<dbReference type="SUPFAM" id="SSF54814">
    <property type="entry name" value="Prokaryotic type KH domain (KH-domain type II)"/>
    <property type="match status" value="1"/>
</dbReference>
<dbReference type="SUPFAM" id="SSF54821">
    <property type="entry name" value="Ribosomal protein S3 C-terminal domain"/>
    <property type="match status" value="1"/>
</dbReference>
<dbReference type="PROSITE" id="PS00548">
    <property type="entry name" value="RIBOSOMAL_S3"/>
    <property type="match status" value="1"/>
</dbReference>
<protein>
    <recommendedName>
        <fullName evidence="3">Small ribosomal subunit protein uS3c</fullName>
    </recommendedName>
    <alternativeName>
        <fullName>30S ribosomal protein S3, chloroplastic</fullName>
    </alternativeName>
</protein>
<reference key="1">
    <citation type="journal article" date="2002" name="Proc. Natl. Acad. Sci. U.S.A.">
        <title>The chloroplast and mitochondrial genome sequences of the charophyte Chaetosphaeridium globosum: insights into the timing of the events that restructured organelle DNAs within the green algal lineage that led to land plants.</title>
        <authorList>
            <person name="Turmel M."/>
            <person name="Otis C."/>
            <person name="Lemieux C."/>
        </authorList>
    </citation>
    <scope>NUCLEOTIDE SEQUENCE [LARGE SCALE GENOMIC DNA]</scope>
    <source>
        <strain>M1311</strain>
    </source>
</reference>
<accession>Q8M9V0</accession>